<protein>
    <recommendedName>
        <fullName>Trypsin inhibitor 1</fullName>
    </recommendedName>
    <alternativeName>
        <fullName>TTII</fullName>
    </alternativeName>
    <alternativeName>
        <fullName>Trypsin inhibitor I</fullName>
    </alternativeName>
</protein>
<keyword id="KW-1015">Disulfide bond</keyword>
<keyword id="KW-0960">Knottin</keyword>
<keyword id="KW-0646">Protease inhibitor</keyword>
<keyword id="KW-0964">Secreted</keyword>
<keyword id="KW-0722">Serine protease inhibitor</keyword>
<keyword id="KW-0732">Signal</keyword>
<dbReference type="EMBL" id="X82230">
    <property type="protein sequence ID" value="CAA57704.1"/>
    <property type="molecule type" value="mRNA"/>
</dbReference>
<dbReference type="PIR" id="S49486">
    <property type="entry name" value="S49486"/>
</dbReference>
<dbReference type="SMR" id="Q43667"/>
<dbReference type="MEROPS" id="I07.020"/>
<dbReference type="GO" id="GO:0005576">
    <property type="term" value="C:extracellular region"/>
    <property type="evidence" value="ECO:0007669"/>
    <property type="project" value="UniProtKB-SubCell"/>
</dbReference>
<dbReference type="GO" id="GO:0004867">
    <property type="term" value="F:serine-type endopeptidase inhibitor activity"/>
    <property type="evidence" value="ECO:0007669"/>
    <property type="project" value="UniProtKB-KW"/>
</dbReference>
<dbReference type="CDD" id="cd00150">
    <property type="entry name" value="PlantTI"/>
    <property type="match status" value="1"/>
</dbReference>
<dbReference type="Gene3D" id="4.10.75.20">
    <property type="match status" value="1"/>
</dbReference>
<dbReference type="InterPro" id="IPR000737">
    <property type="entry name" value="Prot_inh_squash"/>
</dbReference>
<dbReference type="InterPro" id="IPR011052">
    <property type="entry name" value="Proteinase_amylase_inhib_sf"/>
</dbReference>
<dbReference type="Pfam" id="PF00299">
    <property type="entry name" value="Squash"/>
    <property type="match status" value="1"/>
</dbReference>
<dbReference type="SMART" id="SM00286">
    <property type="entry name" value="PTI"/>
    <property type="match status" value="1"/>
</dbReference>
<dbReference type="SUPFAM" id="SSF57027">
    <property type="entry name" value="Plant inhibitors of proteinases and amylases"/>
    <property type="match status" value="1"/>
</dbReference>
<dbReference type="PROSITE" id="PS00286">
    <property type="entry name" value="SQUASH_INHIBITOR"/>
    <property type="match status" value="1"/>
</dbReference>
<reference key="1">
    <citation type="submission" date="1994-10" db="EMBL/GenBank/DDBJ databases">
        <title>cDNA sequence of the Trichosanthes trypsin inhibitor.</title>
        <authorList>
            <person name="Ling M.H."/>
            <person name="Chi C.W."/>
            <person name="Shaw P.C."/>
        </authorList>
    </citation>
    <scope>NUCLEOTIDE SEQUENCE [MRNA]</scope>
    <source>
        <strain>Maximowicz</strain>
        <tissue>Root tuber</tissue>
    </source>
</reference>
<feature type="signal peptide" evidence="2">
    <location>
        <begin position="1"/>
        <end status="unknown"/>
    </location>
</feature>
<feature type="propeptide" id="PRO_0000033218" evidence="2">
    <location>
        <begin status="unknown"/>
        <end position="34"/>
    </location>
</feature>
<feature type="peptide" id="PRO_0000033219" description="Trypsin inhibitor 1">
    <location>
        <begin position="35"/>
        <end position="65"/>
    </location>
</feature>
<feature type="site" description="Reactive bond">
    <location>
        <begin position="41"/>
        <end position="42"/>
    </location>
</feature>
<feature type="disulfide bond" evidence="1">
    <location>
        <begin position="39"/>
        <end position="56"/>
    </location>
</feature>
<feature type="disulfide bond" evidence="1">
    <location>
        <begin position="46"/>
        <end position="58"/>
    </location>
</feature>
<feature type="disulfide bond" evidence="1">
    <location>
        <begin position="52"/>
        <end position="64"/>
    </location>
</feature>
<organism>
    <name type="scientific">Trichosanthes kirilowii</name>
    <name type="common">Chinese snake gourd</name>
    <name type="synonym">Chinese cucumber</name>
    <dbReference type="NCBI Taxonomy" id="3677"/>
    <lineage>
        <taxon>Eukaryota</taxon>
        <taxon>Viridiplantae</taxon>
        <taxon>Streptophyta</taxon>
        <taxon>Embryophyta</taxon>
        <taxon>Tracheophyta</taxon>
        <taxon>Spermatophyta</taxon>
        <taxon>Magnoliopsida</taxon>
        <taxon>eudicotyledons</taxon>
        <taxon>Gunneridae</taxon>
        <taxon>Pentapetalae</taxon>
        <taxon>rosids</taxon>
        <taxon>fabids</taxon>
        <taxon>Cucurbitales</taxon>
        <taxon>Cucurbitaceae</taxon>
        <taxon>Sicyoeae</taxon>
        <taxon>Trichosanthes</taxon>
    </lineage>
</organism>
<name>ITR1_TRIKI</name>
<comment type="function">
    <text evidence="1">Inhibits trypsin.</text>
</comment>
<comment type="subcellular location">
    <subcellularLocation>
        <location evidence="1">Secreted</location>
    </subcellularLocation>
</comment>
<comment type="domain">
    <text evidence="1">The presence of a 'disulfide through disulfide knot' structurally defines this protein as a knottin.</text>
</comment>
<comment type="similarity">
    <text evidence="3">Belongs to the protease inhibitor I7 (squash-type serine protease inhibitor) family.</text>
</comment>
<evidence type="ECO:0000250" key="1"/>
<evidence type="ECO:0000255" key="2"/>
<evidence type="ECO:0000305" key="3"/>
<accession>Q43667</accession>
<sequence>MAAFVESARAGAGADEVIQLVSDGVNEYSEKMMEGVVACPRILMPCKVNDDCLRGCKCLSNGYCG</sequence>
<proteinExistence type="inferred from homology"/>